<keyword id="KW-0686">Riboflavin biosynthesis</keyword>
<keyword id="KW-0808">Transferase</keyword>
<proteinExistence type="inferred from homology"/>
<comment type="function">
    <text evidence="1">Catalyzes the formation of 6,7-dimethyl-8-ribityllumazine by condensation of 5-amino-6-(D-ribitylamino)uracil with 3,4-dihydroxy-2-butanone 4-phosphate. This is the penultimate step in the biosynthesis of riboflavin.</text>
</comment>
<comment type="catalytic activity">
    <reaction evidence="1">
        <text>(2S)-2-hydroxy-3-oxobutyl phosphate + 5-amino-6-(D-ribitylamino)uracil = 6,7-dimethyl-8-(1-D-ribityl)lumazine + phosphate + 2 H2O + H(+)</text>
        <dbReference type="Rhea" id="RHEA:26152"/>
        <dbReference type="ChEBI" id="CHEBI:15377"/>
        <dbReference type="ChEBI" id="CHEBI:15378"/>
        <dbReference type="ChEBI" id="CHEBI:15934"/>
        <dbReference type="ChEBI" id="CHEBI:43474"/>
        <dbReference type="ChEBI" id="CHEBI:58201"/>
        <dbReference type="ChEBI" id="CHEBI:58830"/>
        <dbReference type="EC" id="2.5.1.78"/>
    </reaction>
</comment>
<comment type="pathway">
    <text evidence="1">Cofactor biosynthesis; riboflavin biosynthesis; riboflavin from 2-hydroxy-3-oxobutyl phosphate and 5-amino-6-(D-ribitylamino)uracil: step 1/2.</text>
</comment>
<comment type="subunit">
    <text evidence="1">Forms an icosahedral capsid composed of 60 subunits, arranged as a dodecamer of pentamers.</text>
</comment>
<comment type="similarity">
    <text evidence="1">Belongs to the DMRL synthase family.</text>
</comment>
<sequence length="154" mass="16319">MKVMEGNLVGTGLKIAIVISRFNEFITSKLLSGAMDGLKRHGVNENDVTVAWVPGAFEIPLIAKKLAESRQYDAVIALGAVIRGATSHYDYVCNEVAKGVSHAALSTGTPVIFGVLTTDTIEQAIERAGTKAGNKGWEAAVSAIEMANLLRTFA</sequence>
<reference key="1">
    <citation type="submission" date="2009-06" db="EMBL/GenBank/DDBJ databases">
        <title>Complete sequence of chromosome of Geopacillus sp. WCH70.</title>
        <authorList>
            <consortium name="US DOE Joint Genome Institute"/>
            <person name="Lucas S."/>
            <person name="Copeland A."/>
            <person name="Lapidus A."/>
            <person name="Glavina del Rio T."/>
            <person name="Dalin E."/>
            <person name="Tice H."/>
            <person name="Bruce D."/>
            <person name="Goodwin L."/>
            <person name="Pitluck S."/>
            <person name="Chertkov O."/>
            <person name="Brettin T."/>
            <person name="Detter J.C."/>
            <person name="Han C."/>
            <person name="Larimer F."/>
            <person name="Land M."/>
            <person name="Hauser L."/>
            <person name="Kyrpides N."/>
            <person name="Mikhailova N."/>
            <person name="Brumm P."/>
            <person name="Mead D.A."/>
            <person name="Richardson P."/>
        </authorList>
    </citation>
    <scope>NUCLEOTIDE SEQUENCE [LARGE SCALE GENOMIC DNA]</scope>
    <source>
        <strain>WCH70</strain>
    </source>
</reference>
<organism>
    <name type="scientific">Geobacillus sp. (strain WCH70)</name>
    <dbReference type="NCBI Taxonomy" id="471223"/>
    <lineage>
        <taxon>Bacteria</taxon>
        <taxon>Bacillati</taxon>
        <taxon>Bacillota</taxon>
        <taxon>Bacilli</taxon>
        <taxon>Bacillales</taxon>
        <taxon>Anoxybacillaceae</taxon>
        <taxon>Geobacillus</taxon>
    </lineage>
</organism>
<accession>C5D3M9</accession>
<gene>
    <name evidence="1" type="primary">ribH</name>
    <name type="ordered locus">GWCH70_2236</name>
</gene>
<evidence type="ECO:0000255" key="1">
    <source>
        <dbReference type="HAMAP-Rule" id="MF_00178"/>
    </source>
</evidence>
<dbReference type="EC" id="2.5.1.78" evidence="1"/>
<dbReference type="EMBL" id="CP001638">
    <property type="protein sequence ID" value="ACS24944.1"/>
    <property type="molecule type" value="Genomic_DNA"/>
</dbReference>
<dbReference type="SMR" id="C5D3M9"/>
<dbReference type="STRING" id="471223.GWCH70_2236"/>
<dbReference type="KEGG" id="gwc:GWCH70_2236"/>
<dbReference type="eggNOG" id="COG0054">
    <property type="taxonomic scope" value="Bacteria"/>
</dbReference>
<dbReference type="HOGENOM" id="CLU_089358_1_1_9"/>
<dbReference type="OrthoDB" id="9809709at2"/>
<dbReference type="UniPathway" id="UPA00275">
    <property type="reaction ID" value="UER00404"/>
</dbReference>
<dbReference type="GO" id="GO:0005829">
    <property type="term" value="C:cytosol"/>
    <property type="evidence" value="ECO:0007669"/>
    <property type="project" value="TreeGrafter"/>
</dbReference>
<dbReference type="GO" id="GO:0009349">
    <property type="term" value="C:riboflavin synthase complex"/>
    <property type="evidence" value="ECO:0007669"/>
    <property type="project" value="InterPro"/>
</dbReference>
<dbReference type="GO" id="GO:0000906">
    <property type="term" value="F:6,7-dimethyl-8-ribityllumazine synthase activity"/>
    <property type="evidence" value="ECO:0007669"/>
    <property type="project" value="UniProtKB-UniRule"/>
</dbReference>
<dbReference type="GO" id="GO:0009231">
    <property type="term" value="P:riboflavin biosynthetic process"/>
    <property type="evidence" value="ECO:0007669"/>
    <property type="project" value="UniProtKB-UniRule"/>
</dbReference>
<dbReference type="CDD" id="cd09209">
    <property type="entry name" value="Lumazine_synthase-I"/>
    <property type="match status" value="1"/>
</dbReference>
<dbReference type="FunFam" id="3.40.50.960:FF:000001">
    <property type="entry name" value="6,7-dimethyl-8-ribityllumazine synthase"/>
    <property type="match status" value="1"/>
</dbReference>
<dbReference type="Gene3D" id="3.40.50.960">
    <property type="entry name" value="Lumazine/riboflavin synthase"/>
    <property type="match status" value="1"/>
</dbReference>
<dbReference type="HAMAP" id="MF_00178">
    <property type="entry name" value="Lumazine_synth"/>
    <property type="match status" value="1"/>
</dbReference>
<dbReference type="InterPro" id="IPR034964">
    <property type="entry name" value="LS"/>
</dbReference>
<dbReference type="InterPro" id="IPR002180">
    <property type="entry name" value="LS/RS"/>
</dbReference>
<dbReference type="InterPro" id="IPR036467">
    <property type="entry name" value="LS/RS_sf"/>
</dbReference>
<dbReference type="NCBIfam" id="TIGR00114">
    <property type="entry name" value="lumazine-synth"/>
    <property type="match status" value="1"/>
</dbReference>
<dbReference type="NCBIfam" id="NF000812">
    <property type="entry name" value="PRK00061.1-4"/>
    <property type="match status" value="1"/>
</dbReference>
<dbReference type="PANTHER" id="PTHR21058:SF0">
    <property type="entry name" value="6,7-DIMETHYL-8-RIBITYLLUMAZINE SYNTHASE"/>
    <property type="match status" value="1"/>
</dbReference>
<dbReference type="PANTHER" id="PTHR21058">
    <property type="entry name" value="6,7-DIMETHYL-8-RIBITYLLUMAZINE SYNTHASE DMRL SYNTHASE LUMAZINE SYNTHASE"/>
    <property type="match status" value="1"/>
</dbReference>
<dbReference type="Pfam" id="PF00885">
    <property type="entry name" value="DMRL_synthase"/>
    <property type="match status" value="1"/>
</dbReference>
<dbReference type="SUPFAM" id="SSF52121">
    <property type="entry name" value="Lumazine synthase"/>
    <property type="match status" value="1"/>
</dbReference>
<feature type="chain" id="PRO_1000203794" description="6,7-dimethyl-8-ribityllumazine synthase">
    <location>
        <begin position="1"/>
        <end position="154"/>
    </location>
</feature>
<feature type="active site" description="Proton donor" evidence="1">
    <location>
        <position position="88"/>
    </location>
</feature>
<feature type="binding site" evidence="1">
    <location>
        <position position="22"/>
    </location>
    <ligand>
        <name>5-amino-6-(D-ribitylamino)uracil</name>
        <dbReference type="ChEBI" id="CHEBI:15934"/>
    </ligand>
</feature>
<feature type="binding site" evidence="1">
    <location>
        <begin position="56"/>
        <end position="58"/>
    </location>
    <ligand>
        <name>5-amino-6-(D-ribitylamino)uracil</name>
        <dbReference type="ChEBI" id="CHEBI:15934"/>
    </ligand>
</feature>
<feature type="binding site" evidence="1">
    <location>
        <begin position="80"/>
        <end position="82"/>
    </location>
    <ligand>
        <name>5-amino-6-(D-ribitylamino)uracil</name>
        <dbReference type="ChEBI" id="CHEBI:15934"/>
    </ligand>
</feature>
<feature type="binding site" evidence="1">
    <location>
        <begin position="85"/>
        <end position="86"/>
    </location>
    <ligand>
        <name>(2S)-2-hydroxy-3-oxobutyl phosphate</name>
        <dbReference type="ChEBI" id="CHEBI:58830"/>
    </ligand>
</feature>
<feature type="binding site" evidence="1">
    <location>
        <position position="113"/>
    </location>
    <ligand>
        <name>5-amino-6-(D-ribitylamino)uracil</name>
        <dbReference type="ChEBI" id="CHEBI:15934"/>
    </ligand>
</feature>
<feature type="binding site" evidence="1">
    <location>
        <position position="127"/>
    </location>
    <ligand>
        <name>(2S)-2-hydroxy-3-oxobutyl phosphate</name>
        <dbReference type="ChEBI" id="CHEBI:58830"/>
    </ligand>
</feature>
<protein>
    <recommendedName>
        <fullName evidence="1">6,7-dimethyl-8-ribityllumazine synthase</fullName>
        <shortName evidence="1">DMRL synthase</shortName>
        <shortName evidence="1">LS</shortName>
        <shortName evidence="1">Lumazine synthase</shortName>
        <ecNumber evidence="1">2.5.1.78</ecNumber>
    </recommendedName>
</protein>
<name>RISB_GEOSW</name>